<gene>
    <name evidence="1" type="primary">tam</name>
    <name type="ordered locus">Mkms_0395</name>
</gene>
<keyword id="KW-0963">Cytoplasm</keyword>
<keyword id="KW-0489">Methyltransferase</keyword>
<keyword id="KW-0949">S-adenosyl-L-methionine</keyword>
<keyword id="KW-0808">Transferase</keyword>
<protein>
    <recommendedName>
        <fullName evidence="1">Trans-aconitate 2-methyltransferase</fullName>
        <ecNumber evidence="1">2.1.1.144</ecNumber>
    </recommendedName>
</protein>
<organism>
    <name type="scientific">Mycobacterium sp. (strain KMS)</name>
    <dbReference type="NCBI Taxonomy" id="189918"/>
    <lineage>
        <taxon>Bacteria</taxon>
        <taxon>Bacillati</taxon>
        <taxon>Actinomycetota</taxon>
        <taxon>Actinomycetes</taxon>
        <taxon>Mycobacteriales</taxon>
        <taxon>Mycobacteriaceae</taxon>
        <taxon>Mycobacterium</taxon>
    </lineage>
</organism>
<accession>A1U9V4</accession>
<feature type="chain" id="PRO_1000056563" description="Trans-aconitate 2-methyltransferase">
    <location>
        <begin position="1"/>
        <end position="254"/>
    </location>
</feature>
<dbReference type="EC" id="2.1.1.144" evidence="1"/>
<dbReference type="EMBL" id="CP000518">
    <property type="protein sequence ID" value="ABL89612.1"/>
    <property type="molecule type" value="Genomic_DNA"/>
</dbReference>
<dbReference type="SMR" id="A1U9V4"/>
<dbReference type="STRING" id="189918.Mkms_0395"/>
<dbReference type="KEGG" id="mkm:Mkms_0395"/>
<dbReference type="HOGENOM" id="CLU_037990_5_2_11"/>
<dbReference type="OrthoDB" id="9795085at2"/>
<dbReference type="GO" id="GO:0005737">
    <property type="term" value="C:cytoplasm"/>
    <property type="evidence" value="ECO:0007669"/>
    <property type="project" value="UniProtKB-SubCell"/>
</dbReference>
<dbReference type="GO" id="GO:0030798">
    <property type="term" value="F:trans-aconitate 2-methyltransferase activity"/>
    <property type="evidence" value="ECO:0007669"/>
    <property type="project" value="UniProtKB-UniRule"/>
</dbReference>
<dbReference type="GO" id="GO:0032259">
    <property type="term" value="P:methylation"/>
    <property type="evidence" value="ECO:0007669"/>
    <property type="project" value="UniProtKB-KW"/>
</dbReference>
<dbReference type="CDD" id="cd02440">
    <property type="entry name" value="AdoMet_MTases"/>
    <property type="match status" value="1"/>
</dbReference>
<dbReference type="Gene3D" id="1.10.150.290">
    <property type="entry name" value="S-adenosyl-L-methionine-dependent methyltransferases"/>
    <property type="match status" value="1"/>
</dbReference>
<dbReference type="Gene3D" id="3.40.50.150">
    <property type="entry name" value="Vaccinia Virus protein VP39"/>
    <property type="match status" value="1"/>
</dbReference>
<dbReference type="HAMAP" id="MF_00560">
    <property type="entry name" value="Tran_acon_Me_trans"/>
    <property type="match status" value="1"/>
</dbReference>
<dbReference type="InterPro" id="IPR029063">
    <property type="entry name" value="SAM-dependent_MTases_sf"/>
</dbReference>
<dbReference type="InterPro" id="IPR023506">
    <property type="entry name" value="Trans-aconitate_MeTrfase"/>
</dbReference>
<dbReference type="InterPro" id="IPR023149">
    <property type="entry name" value="Trans_acon_MeTrfase_C"/>
</dbReference>
<dbReference type="NCBIfam" id="NF010703">
    <property type="entry name" value="PRK14103.1"/>
    <property type="match status" value="1"/>
</dbReference>
<dbReference type="PANTHER" id="PTHR43861:SF1">
    <property type="entry name" value="TRANS-ACONITATE 2-METHYLTRANSFERASE"/>
    <property type="match status" value="1"/>
</dbReference>
<dbReference type="PANTHER" id="PTHR43861">
    <property type="entry name" value="TRANS-ACONITATE 2-METHYLTRANSFERASE-RELATED"/>
    <property type="match status" value="1"/>
</dbReference>
<dbReference type="Pfam" id="PF13489">
    <property type="entry name" value="Methyltransf_23"/>
    <property type="match status" value="1"/>
</dbReference>
<dbReference type="SUPFAM" id="SSF53335">
    <property type="entry name" value="S-adenosyl-L-methionine-dependent methyltransferases"/>
    <property type="match status" value="1"/>
</dbReference>
<sequence length="254" mass="28459">MWNPEAYLSFADHRGRPFFDLLARVGADAPRRVVDLGCGPGNLTVVLRHRWPEAVVEAWDNSPEMVAAARERGVQANLGDVRGWSPQPDTDVVLSNATLQWVPEHPELLTRWAGALAAGSWLAMQVPGNFDAPSHQAVRRLADREPWAPLLHDIPFRVGKVVETPADYAALLTDAGCSVDAWETTYIHELTDAHPVLEWITGTALRPVRSRLTDEQWDRFRAELIPLLDEAYPVRADGRTFFPFRRVFVVARTG</sequence>
<proteinExistence type="inferred from homology"/>
<comment type="function">
    <text evidence="1">Catalyzes the S-adenosylmethionine monomethyl esterification of trans-aconitate.</text>
</comment>
<comment type="catalytic activity">
    <reaction evidence="1">
        <text>trans-aconitate + S-adenosyl-L-methionine = (E)-3-(methoxycarbonyl)pent-2-enedioate + S-adenosyl-L-homocysteine</text>
        <dbReference type="Rhea" id="RHEA:14969"/>
        <dbReference type="ChEBI" id="CHEBI:15708"/>
        <dbReference type="ChEBI" id="CHEBI:57470"/>
        <dbReference type="ChEBI" id="CHEBI:57856"/>
        <dbReference type="ChEBI" id="CHEBI:59789"/>
        <dbReference type="EC" id="2.1.1.144"/>
    </reaction>
</comment>
<comment type="subcellular location">
    <subcellularLocation>
        <location evidence="1">Cytoplasm</location>
    </subcellularLocation>
</comment>
<comment type="similarity">
    <text evidence="1">Belongs to the methyltransferase superfamily. Tam family.</text>
</comment>
<evidence type="ECO:0000255" key="1">
    <source>
        <dbReference type="HAMAP-Rule" id="MF_00560"/>
    </source>
</evidence>
<reference key="1">
    <citation type="submission" date="2006-12" db="EMBL/GenBank/DDBJ databases">
        <title>Complete sequence of chromosome of Mycobacterium sp. KMS.</title>
        <authorList>
            <consortium name="US DOE Joint Genome Institute"/>
            <person name="Copeland A."/>
            <person name="Lucas S."/>
            <person name="Lapidus A."/>
            <person name="Barry K."/>
            <person name="Detter J.C."/>
            <person name="Glavina del Rio T."/>
            <person name="Hammon N."/>
            <person name="Israni S."/>
            <person name="Dalin E."/>
            <person name="Tice H."/>
            <person name="Pitluck S."/>
            <person name="Kiss H."/>
            <person name="Brettin T."/>
            <person name="Bruce D."/>
            <person name="Han C."/>
            <person name="Tapia R."/>
            <person name="Gilna P."/>
            <person name="Schmutz J."/>
            <person name="Larimer F."/>
            <person name="Land M."/>
            <person name="Hauser L."/>
            <person name="Kyrpides N."/>
            <person name="Mikhailova N."/>
            <person name="Miller C.D."/>
            <person name="Richardson P."/>
        </authorList>
    </citation>
    <scope>NUCLEOTIDE SEQUENCE [LARGE SCALE GENOMIC DNA]</scope>
    <source>
        <strain>KMS</strain>
    </source>
</reference>
<name>TAM_MYCSK</name>